<keyword id="KW-0067">ATP-binding</keyword>
<keyword id="KW-0460">Magnesium</keyword>
<keyword id="KW-0547">Nucleotide-binding</keyword>
<keyword id="KW-0808">Transferase</keyword>
<keyword id="KW-0819">tRNA processing</keyword>
<feature type="chain" id="PRO_1000020625" description="tRNA dimethylallyltransferase">
    <location>
        <begin position="1"/>
        <end position="313"/>
    </location>
</feature>
<feature type="region of interest" description="Interaction with substrate tRNA" evidence="1">
    <location>
        <begin position="36"/>
        <end position="39"/>
    </location>
</feature>
<feature type="region of interest" description="Interaction with substrate tRNA" evidence="1">
    <location>
        <begin position="160"/>
        <end position="164"/>
    </location>
</feature>
<feature type="region of interest" description="Interaction with substrate tRNA" evidence="1">
    <location>
        <begin position="243"/>
        <end position="248"/>
    </location>
</feature>
<feature type="binding site" evidence="1">
    <location>
        <begin position="11"/>
        <end position="18"/>
    </location>
    <ligand>
        <name>ATP</name>
        <dbReference type="ChEBI" id="CHEBI:30616"/>
    </ligand>
</feature>
<feature type="binding site" evidence="1">
    <location>
        <begin position="13"/>
        <end position="18"/>
    </location>
    <ligand>
        <name>substrate</name>
    </ligand>
</feature>
<feature type="site" description="Interaction with substrate tRNA" evidence="1">
    <location>
        <position position="102"/>
    </location>
</feature>
<feature type="site" description="Interaction with substrate tRNA" evidence="1">
    <location>
        <position position="124"/>
    </location>
</feature>
<sequence>MPTPKAFALLGPTAGGKTALALKIAETLPVEIISLDSALVYTGMDIGTAKPSASERAFVPHHLIDIITPVQTYSAARFVEDCTRLVGEISSRGRFALIVGGTMMYFRALTQGLNDLPEADACLRADLDEQKQMYGLDFLYRTLQQVDPETACRLKPNDSQRIGRALEVYYLTGKPMSTHLGSPTSHTLPFDLHTAALIPENRARLHENIALRFHLMLEQGFIGEVENLRRLYPSLTADSPAIRCVGYRQAWEYLDGKTDFPAFVEKGIAATRQLAKRQLTWLRKTPLDCVTDPFSDGNSCTRLIEAAKRFFGA</sequence>
<name>MIAA_NEIMF</name>
<proteinExistence type="inferred from homology"/>
<protein>
    <recommendedName>
        <fullName evidence="1">tRNA dimethylallyltransferase</fullName>
        <ecNumber evidence="1">2.5.1.75</ecNumber>
    </recommendedName>
    <alternativeName>
        <fullName evidence="1">Dimethylallyl diphosphate:tRNA dimethylallyltransferase</fullName>
        <shortName evidence="1">DMAPP:tRNA dimethylallyltransferase</shortName>
        <shortName evidence="1">DMATase</shortName>
    </alternativeName>
    <alternativeName>
        <fullName evidence="1">Isopentenyl-diphosphate:tRNA isopentenyltransferase</fullName>
        <shortName evidence="1">IPP transferase</shortName>
        <shortName evidence="1">IPPT</shortName>
        <shortName evidence="1">IPTase</shortName>
    </alternativeName>
</protein>
<gene>
    <name evidence="1" type="primary">miaA</name>
    <name type="ordered locus">NMC0912</name>
</gene>
<dbReference type="EC" id="2.5.1.75" evidence="1"/>
<dbReference type="EMBL" id="AM421808">
    <property type="protein sequence ID" value="CAM10190.1"/>
    <property type="molecule type" value="Genomic_DNA"/>
</dbReference>
<dbReference type="RefSeq" id="WP_002221135.1">
    <property type="nucleotide sequence ID" value="NC_008767.1"/>
</dbReference>
<dbReference type="SMR" id="A1KTK4"/>
<dbReference type="KEGG" id="nmc:NMC0912"/>
<dbReference type="HOGENOM" id="CLU_032616_0_0_4"/>
<dbReference type="Proteomes" id="UP000002286">
    <property type="component" value="Chromosome"/>
</dbReference>
<dbReference type="GO" id="GO:0005524">
    <property type="term" value="F:ATP binding"/>
    <property type="evidence" value="ECO:0007669"/>
    <property type="project" value="UniProtKB-UniRule"/>
</dbReference>
<dbReference type="GO" id="GO:0052381">
    <property type="term" value="F:tRNA dimethylallyltransferase activity"/>
    <property type="evidence" value="ECO:0007669"/>
    <property type="project" value="UniProtKB-UniRule"/>
</dbReference>
<dbReference type="GO" id="GO:0006400">
    <property type="term" value="P:tRNA modification"/>
    <property type="evidence" value="ECO:0007669"/>
    <property type="project" value="TreeGrafter"/>
</dbReference>
<dbReference type="Gene3D" id="1.10.20.140">
    <property type="match status" value="1"/>
</dbReference>
<dbReference type="Gene3D" id="3.40.50.300">
    <property type="entry name" value="P-loop containing nucleotide triphosphate hydrolases"/>
    <property type="match status" value="1"/>
</dbReference>
<dbReference type="HAMAP" id="MF_00185">
    <property type="entry name" value="IPP_trans"/>
    <property type="match status" value="1"/>
</dbReference>
<dbReference type="InterPro" id="IPR039657">
    <property type="entry name" value="Dimethylallyltransferase"/>
</dbReference>
<dbReference type="InterPro" id="IPR018022">
    <property type="entry name" value="IPT"/>
</dbReference>
<dbReference type="InterPro" id="IPR027417">
    <property type="entry name" value="P-loop_NTPase"/>
</dbReference>
<dbReference type="NCBIfam" id="TIGR00174">
    <property type="entry name" value="miaA"/>
    <property type="match status" value="1"/>
</dbReference>
<dbReference type="PANTHER" id="PTHR11088">
    <property type="entry name" value="TRNA DIMETHYLALLYLTRANSFERASE"/>
    <property type="match status" value="1"/>
</dbReference>
<dbReference type="PANTHER" id="PTHR11088:SF60">
    <property type="entry name" value="TRNA DIMETHYLALLYLTRANSFERASE"/>
    <property type="match status" value="1"/>
</dbReference>
<dbReference type="Pfam" id="PF01715">
    <property type="entry name" value="IPPT"/>
    <property type="match status" value="1"/>
</dbReference>
<dbReference type="SUPFAM" id="SSF52540">
    <property type="entry name" value="P-loop containing nucleoside triphosphate hydrolases"/>
    <property type="match status" value="2"/>
</dbReference>
<organism>
    <name type="scientific">Neisseria meningitidis serogroup C / serotype 2a (strain ATCC 700532 / DSM 15464 / FAM18)</name>
    <dbReference type="NCBI Taxonomy" id="272831"/>
    <lineage>
        <taxon>Bacteria</taxon>
        <taxon>Pseudomonadati</taxon>
        <taxon>Pseudomonadota</taxon>
        <taxon>Betaproteobacteria</taxon>
        <taxon>Neisseriales</taxon>
        <taxon>Neisseriaceae</taxon>
        <taxon>Neisseria</taxon>
    </lineage>
</organism>
<reference key="1">
    <citation type="journal article" date="2007" name="PLoS Genet.">
        <title>Meningococcal genetic variation mechanisms viewed through comparative analysis of serogroup C strain FAM18.</title>
        <authorList>
            <person name="Bentley S.D."/>
            <person name="Vernikos G.S."/>
            <person name="Snyder L.A.S."/>
            <person name="Churcher C."/>
            <person name="Arrowsmith C."/>
            <person name="Chillingworth T."/>
            <person name="Cronin A."/>
            <person name="Davis P.H."/>
            <person name="Holroyd N.E."/>
            <person name="Jagels K."/>
            <person name="Maddison M."/>
            <person name="Moule S."/>
            <person name="Rabbinowitsch E."/>
            <person name="Sharp S."/>
            <person name="Unwin L."/>
            <person name="Whitehead S."/>
            <person name="Quail M.A."/>
            <person name="Achtman M."/>
            <person name="Barrell B.G."/>
            <person name="Saunders N.J."/>
            <person name="Parkhill J."/>
        </authorList>
    </citation>
    <scope>NUCLEOTIDE SEQUENCE [LARGE SCALE GENOMIC DNA]</scope>
    <source>
        <strain>ATCC 700532 / DSM 15464 / FAM18</strain>
    </source>
</reference>
<comment type="function">
    <text evidence="1">Catalyzes the transfer of a dimethylallyl group onto the adenine at position 37 in tRNAs that read codons beginning with uridine, leading to the formation of N6-(dimethylallyl)adenosine (i(6)A).</text>
</comment>
<comment type="catalytic activity">
    <reaction evidence="1">
        <text>adenosine(37) in tRNA + dimethylallyl diphosphate = N(6)-dimethylallyladenosine(37) in tRNA + diphosphate</text>
        <dbReference type="Rhea" id="RHEA:26482"/>
        <dbReference type="Rhea" id="RHEA-COMP:10162"/>
        <dbReference type="Rhea" id="RHEA-COMP:10375"/>
        <dbReference type="ChEBI" id="CHEBI:33019"/>
        <dbReference type="ChEBI" id="CHEBI:57623"/>
        <dbReference type="ChEBI" id="CHEBI:74411"/>
        <dbReference type="ChEBI" id="CHEBI:74415"/>
        <dbReference type="EC" id="2.5.1.75"/>
    </reaction>
</comment>
<comment type="cofactor">
    <cofactor evidence="1">
        <name>Mg(2+)</name>
        <dbReference type="ChEBI" id="CHEBI:18420"/>
    </cofactor>
</comment>
<comment type="subunit">
    <text evidence="1">Monomer.</text>
</comment>
<comment type="similarity">
    <text evidence="1">Belongs to the IPP transferase family.</text>
</comment>
<accession>A1KTK4</accession>
<evidence type="ECO:0000255" key="1">
    <source>
        <dbReference type="HAMAP-Rule" id="MF_00185"/>
    </source>
</evidence>